<name>CYB_ANTMO</name>
<sequence length="371" mass="42196">MPHHYILTLFGLLPVATNISTWWNFGSMLLTCLALQVLTGFFLAIHYTANINLAFSSIIHITRDVPYGWMMQNLHAIGASMFFICIYIHIARGLYYGSYLNKETWMSGITLLITLMATAFFGYVLPWGQMSFWAATVITNLLTAVPYLGXSLTTWLWGGFAINDPTLTRFFALHFILPFAIISLSSLHIILLHEEGSSNPLGTNPDIDKIPFHPYHSHKDLLLLTFMILLLFTIVSFLPDIFNDPDNFSKANPLVTPQHIKPEWYFLFAYGILRSIPNKLGGALALVMSIMILFIIPFTHTARLRPMTFRPLSQLMFWTLVSTFATITWAATKPVEPPFIIISQTTSMLYFTFFLSTPILGWMENKMMNIS</sequence>
<feature type="chain" id="PRO_0000061120" description="Cytochrome b">
    <location>
        <begin position="1"/>
        <end position="371"/>
    </location>
</feature>
<feature type="transmembrane region" description="Helical" evidence="2">
    <location>
        <begin position="25"/>
        <end position="45"/>
    </location>
</feature>
<feature type="transmembrane region" description="Helical" evidence="2">
    <location>
        <begin position="69"/>
        <end position="90"/>
    </location>
</feature>
<feature type="transmembrane region" description="Helical" evidence="2">
    <location>
        <begin position="105"/>
        <end position="125"/>
    </location>
</feature>
<feature type="transmembrane region" description="Helical" evidence="2">
    <location>
        <begin position="170"/>
        <end position="190"/>
    </location>
</feature>
<feature type="transmembrane region" description="Helical" evidence="2">
    <location>
        <begin position="218"/>
        <end position="238"/>
    </location>
</feature>
<feature type="transmembrane region" description="Helical" evidence="2">
    <location>
        <begin position="280"/>
        <end position="300"/>
    </location>
</feature>
<feature type="transmembrane region" description="Helical" evidence="2">
    <location>
        <begin position="312"/>
        <end position="332"/>
    </location>
</feature>
<feature type="transmembrane region" description="Helical" evidence="2">
    <location>
        <begin position="339"/>
        <end position="358"/>
    </location>
</feature>
<feature type="binding site" description="axial binding residue" evidence="2">
    <location>
        <position position="75"/>
    </location>
    <ligand>
        <name>heme b</name>
        <dbReference type="ChEBI" id="CHEBI:60344"/>
        <label>b562</label>
    </ligand>
    <ligandPart>
        <name>Fe</name>
        <dbReference type="ChEBI" id="CHEBI:18248"/>
    </ligandPart>
</feature>
<feature type="binding site" description="axial binding residue" evidence="2">
    <location>
        <position position="89"/>
    </location>
    <ligand>
        <name>heme b</name>
        <dbReference type="ChEBI" id="CHEBI:60344"/>
        <label>b566</label>
    </ligand>
    <ligandPart>
        <name>Fe</name>
        <dbReference type="ChEBI" id="CHEBI:18248"/>
    </ligandPart>
</feature>
<feature type="binding site" description="axial binding residue" evidence="2">
    <location>
        <position position="174"/>
    </location>
    <ligand>
        <name>heme b</name>
        <dbReference type="ChEBI" id="CHEBI:60344"/>
        <label>b562</label>
    </ligand>
    <ligandPart>
        <name>Fe</name>
        <dbReference type="ChEBI" id="CHEBI:18248"/>
    </ligandPart>
</feature>
<feature type="binding site" description="axial binding residue" evidence="2">
    <location>
        <position position="188"/>
    </location>
    <ligand>
        <name>heme b</name>
        <dbReference type="ChEBI" id="CHEBI:60344"/>
        <label>b566</label>
    </ligand>
    <ligandPart>
        <name>Fe</name>
        <dbReference type="ChEBI" id="CHEBI:18248"/>
    </ligandPart>
</feature>
<feature type="binding site" evidence="2">
    <location>
        <position position="193"/>
    </location>
    <ligand>
        <name>a ubiquinone</name>
        <dbReference type="ChEBI" id="CHEBI:16389"/>
    </ligand>
</feature>
<geneLocation type="mitochondrion"/>
<accession>O48093</accession>
<gene>
    <name type="primary">MT-CYB</name>
    <name type="synonym">COB</name>
    <name type="synonym">CYTB</name>
    <name type="synonym">MTCYB</name>
</gene>
<evidence type="ECO:0000250" key="1"/>
<evidence type="ECO:0000250" key="2">
    <source>
        <dbReference type="UniProtKB" id="P00157"/>
    </source>
</evidence>
<evidence type="ECO:0000255" key="3">
    <source>
        <dbReference type="PROSITE-ProRule" id="PRU00967"/>
    </source>
</evidence>
<evidence type="ECO:0000255" key="4">
    <source>
        <dbReference type="PROSITE-ProRule" id="PRU00968"/>
    </source>
</evidence>
<organism>
    <name type="scientific">Antaresia maculosa</name>
    <name type="common">Eastern small blotched python</name>
    <name type="synonym">Liasis maculosa</name>
    <dbReference type="NCBI Taxonomy" id="51891"/>
    <lineage>
        <taxon>Eukaryota</taxon>
        <taxon>Metazoa</taxon>
        <taxon>Chordata</taxon>
        <taxon>Craniata</taxon>
        <taxon>Vertebrata</taxon>
        <taxon>Euteleostomi</taxon>
        <taxon>Lepidosauria</taxon>
        <taxon>Squamata</taxon>
        <taxon>Bifurcata</taxon>
        <taxon>Unidentata</taxon>
        <taxon>Episquamata</taxon>
        <taxon>Toxicofera</taxon>
        <taxon>Serpentes</taxon>
        <taxon>Henophidia</taxon>
        <taxon>Pythonidae</taxon>
        <taxon>Antaresia</taxon>
    </lineage>
</organism>
<keyword id="KW-0249">Electron transport</keyword>
<keyword id="KW-0349">Heme</keyword>
<keyword id="KW-0408">Iron</keyword>
<keyword id="KW-0472">Membrane</keyword>
<keyword id="KW-0479">Metal-binding</keyword>
<keyword id="KW-0496">Mitochondrion</keyword>
<keyword id="KW-0999">Mitochondrion inner membrane</keyword>
<keyword id="KW-0679">Respiratory chain</keyword>
<keyword id="KW-0812">Transmembrane</keyword>
<keyword id="KW-1133">Transmembrane helix</keyword>
<keyword id="KW-0813">Transport</keyword>
<keyword id="KW-0830">Ubiquinone</keyword>
<dbReference type="EMBL" id="U69838">
    <property type="protein sequence ID" value="AAC01872.1"/>
    <property type="molecule type" value="Genomic_DNA"/>
</dbReference>
<dbReference type="GO" id="GO:0005743">
    <property type="term" value="C:mitochondrial inner membrane"/>
    <property type="evidence" value="ECO:0007669"/>
    <property type="project" value="UniProtKB-SubCell"/>
</dbReference>
<dbReference type="GO" id="GO:0045275">
    <property type="term" value="C:respiratory chain complex III"/>
    <property type="evidence" value="ECO:0007669"/>
    <property type="project" value="InterPro"/>
</dbReference>
<dbReference type="GO" id="GO:0046872">
    <property type="term" value="F:metal ion binding"/>
    <property type="evidence" value="ECO:0007669"/>
    <property type="project" value="UniProtKB-KW"/>
</dbReference>
<dbReference type="GO" id="GO:0008121">
    <property type="term" value="F:ubiquinol-cytochrome-c reductase activity"/>
    <property type="evidence" value="ECO:0007669"/>
    <property type="project" value="InterPro"/>
</dbReference>
<dbReference type="GO" id="GO:0006122">
    <property type="term" value="P:mitochondrial electron transport, ubiquinol to cytochrome c"/>
    <property type="evidence" value="ECO:0007669"/>
    <property type="project" value="TreeGrafter"/>
</dbReference>
<dbReference type="CDD" id="cd00290">
    <property type="entry name" value="cytochrome_b_C"/>
    <property type="match status" value="1"/>
</dbReference>
<dbReference type="CDD" id="cd00284">
    <property type="entry name" value="Cytochrome_b_N"/>
    <property type="match status" value="1"/>
</dbReference>
<dbReference type="Gene3D" id="1.20.810.10">
    <property type="entry name" value="Cytochrome Bc1 Complex, Chain C"/>
    <property type="match status" value="1"/>
</dbReference>
<dbReference type="InterPro" id="IPR005798">
    <property type="entry name" value="Cyt_b/b6_C"/>
</dbReference>
<dbReference type="InterPro" id="IPR036150">
    <property type="entry name" value="Cyt_b/b6_C_sf"/>
</dbReference>
<dbReference type="InterPro" id="IPR005797">
    <property type="entry name" value="Cyt_b/b6_N"/>
</dbReference>
<dbReference type="InterPro" id="IPR027387">
    <property type="entry name" value="Cytb/b6-like_sf"/>
</dbReference>
<dbReference type="InterPro" id="IPR030689">
    <property type="entry name" value="Cytochrome_b"/>
</dbReference>
<dbReference type="InterPro" id="IPR048260">
    <property type="entry name" value="Cytochrome_b_C_euk/bac"/>
</dbReference>
<dbReference type="InterPro" id="IPR048259">
    <property type="entry name" value="Cytochrome_b_N_euk/bac"/>
</dbReference>
<dbReference type="InterPro" id="IPR016174">
    <property type="entry name" value="Di-haem_cyt_TM"/>
</dbReference>
<dbReference type="PANTHER" id="PTHR19271">
    <property type="entry name" value="CYTOCHROME B"/>
    <property type="match status" value="1"/>
</dbReference>
<dbReference type="PANTHER" id="PTHR19271:SF16">
    <property type="entry name" value="CYTOCHROME B"/>
    <property type="match status" value="1"/>
</dbReference>
<dbReference type="Pfam" id="PF00032">
    <property type="entry name" value="Cytochrom_B_C"/>
    <property type="match status" value="1"/>
</dbReference>
<dbReference type="Pfam" id="PF00033">
    <property type="entry name" value="Cytochrome_B"/>
    <property type="match status" value="1"/>
</dbReference>
<dbReference type="PIRSF" id="PIRSF038885">
    <property type="entry name" value="COB"/>
    <property type="match status" value="1"/>
</dbReference>
<dbReference type="SUPFAM" id="SSF81648">
    <property type="entry name" value="a domain/subunit of cytochrome bc1 complex (Ubiquinol-cytochrome c reductase)"/>
    <property type="match status" value="1"/>
</dbReference>
<dbReference type="SUPFAM" id="SSF81342">
    <property type="entry name" value="Transmembrane di-heme cytochromes"/>
    <property type="match status" value="1"/>
</dbReference>
<dbReference type="PROSITE" id="PS51003">
    <property type="entry name" value="CYTB_CTER"/>
    <property type="match status" value="1"/>
</dbReference>
<dbReference type="PROSITE" id="PS51002">
    <property type="entry name" value="CYTB_NTER"/>
    <property type="match status" value="1"/>
</dbReference>
<proteinExistence type="inferred from homology"/>
<protein>
    <recommendedName>
        <fullName>Cytochrome b</fullName>
    </recommendedName>
    <alternativeName>
        <fullName>Complex III subunit 3</fullName>
    </alternativeName>
    <alternativeName>
        <fullName>Complex III subunit III</fullName>
    </alternativeName>
    <alternativeName>
        <fullName>Cytochrome b-c1 complex subunit 3</fullName>
    </alternativeName>
    <alternativeName>
        <fullName>Ubiquinol-cytochrome-c reductase complex cytochrome b subunit</fullName>
    </alternativeName>
</protein>
<comment type="function">
    <text evidence="2">Component of the ubiquinol-cytochrome c reductase complex (complex III or cytochrome b-c1 complex) that is part of the mitochondrial respiratory chain. The b-c1 complex mediates electron transfer from ubiquinol to cytochrome c. Contributes to the generation of a proton gradient across the mitochondrial membrane that is then used for ATP synthesis.</text>
</comment>
<comment type="cofactor">
    <cofactor evidence="2">
        <name>heme b</name>
        <dbReference type="ChEBI" id="CHEBI:60344"/>
    </cofactor>
    <text evidence="2">Binds 2 heme b groups non-covalently.</text>
</comment>
<comment type="subunit">
    <text evidence="2">The cytochrome bc1 complex contains 3 respiratory subunits (MT-CYB, CYC1 and UQCRFS1), 2 core proteins (UQCRC1 and UQCRC2) and probably 6 low-molecular weight proteins.</text>
</comment>
<comment type="subcellular location">
    <subcellularLocation>
        <location evidence="2">Mitochondrion inner membrane</location>
        <topology evidence="2">Multi-pass membrane protein</topology>
    </subcellularLocation>
</comment>
<comment type="miscellaneous">
    <text evidence="1">Heme 1 (or BL or b562) is low-potential and absorbs at about 562 nm, and heme 2 (or BH or b566) is high-potential and absorbs at about 566 nm.</text>
</comment>
<comment type="similarity">
    <text evidence="3 4">Belongs to the cytochrome b family.</text>
</comment>
<comment type="caution">
    <text evidence="2">The full-length protein contains only eight transmembrane helices, not nine as predicted by bioinformatics tools.</text>
</comment>
<reference key="1">
    <citation type="thesis" date="1997" institute="Queen's University / Kingston" country="Canada">
        <title>Hic Sunt Serpentes -- molecular phylogenetics and the Boidae (Serpentes: Booidea).</title>
        <authorList>
            <person name="Campbell B.N."/>
        </authorList>
    </citation>
    <scope>NUCLEOTIDE SEQUENCE [GENOMIC DNA]</scope>
</reference>